<reference key="1">
    <citation type="journal article" date="2002" name="Proc. Natl. Acad. Sci. U.S.A.">
        <title>Genome sequence of Streptococcus mutans UA159, a cariogenic dental pathogen.</title>
        <authorList>
            <person name="Ajdic D.J."/>
            <person name="McShan W.M."/>
            <person name="McLaughlin R.E."/>
            <person name="Savic G."/>
            <person name="Chang J."/>
            <person name="Carson M.B."/>
            <person name="Primeaux C."/>
            <person name="Tian R."/>
            <person name="Kenton S."/>
            <person name="Jia H.G."/>
            <person name="Lin S.P."/>
            <person name="Qian Y."/>
            <person name="Li S."/>
            <person name="Zhu H."/>
            <person name="Najar F.Z."/>
            <person name="Lai H."/>
            <person name="White J."/>
            <person name="Roe B.A."/>
            <person name="Ferretti J.J."/>
        </authorList>
    </citation>
    <scope>NUCLEOTIDE SEQUENCE [LARGE SCALE GENOMIC DNA]</scope>
    <source>
        <strain>ATCC 700610 / UA159</strain>
    </source>
</reference>
<keyword id="KW-0030">Aminoacyl-tRNA synthetase</keyword>
<keyword id="KW-0067">ATP-binding</keyword>
<keyword id="KW-0963">Cytoplasm</keyword>
<keyword id="KW-0436">Ligase</keyword>
<keyword id="KW-0479">Metal-binding</keyword>
<keyword id="KW-0547">Nucleotide-binding</keyword>
<keyword id="KW-0648">Protein biosynthesis</keyword>
<keyword id="KW-1185">Reference proteome</keyword>
<keyword id="KW-0694">RNA-binding</keyword>
<keyword id="KW-0820">tRNA-binding</keyword>
<keyword id="KW-0862">Zinc</keyword>
<feature type="chain" id="PRO_0000075213" description="Alanine--tRNA ligase">
    <location>
        <begin position="1"/>
        <end position="872"/>
    </location>
</feature>
<feature type="binding site" evidence="1">
    <location>
        <position position="567"/>
    </location>
    <ligand>
        <name>Zn(2+)</name>
        <dbReference type="ChEBI" id="CHEBI:29105"/>
    </ligand>
</feature>
<feature type="binding site" evidence="1">
    <location>
        <position position="571"/>
    </location>
    <ligand>
        <name>Zn(2+)</name>
        <dbReference type="ChEBI" id="CHEBI:29105"/>
    </ligand>
</feature>
<feature type="binding site" evidence="1">
    <location>
        <position position="669"/>
    </location>
    <ligand>
        <name>Zn(2+)</name>
        <dbReference type="ChEBI" id="CHEBI:29105"/>
    </ligand>
</feature>
<feature type="binding site" evidence="1">
    <location>
        <position position="673"/>
    </location>
    <ligand>
        <name>Zn(2+)</name>
        <dbReference type="ChEBI" id="CHEBI:29105"/>
    </ligand>
</feature>
<protein>
    <recommendedName>
        <fullName evidence="1">Alanine--tRNA ligase</fullName>
        <ecNumber evidence="1">6.1.1.7</ecNumber>
    </recommendedName>
    <alternativeName>
        <fullName evidence="1">Alanyl-tRNA synthetase</fullName>
        <shortName evidence="1">AlaRS</shortName>
    </alternativeName>
</protein>
<proteinExistence type="inferred from homology"/>
<comment type="function">
    <text evidence="1">Catalyzes the attachment of alanine to tRNA(Ala) in a two-step reaction: alanine is first activated by ATP to form Ala-AMP and then transferred to the acceptor end of tRNA(Ala). Also edits incorrectly charged Ser-tRNA(Ala) and Gly-tRNA(Ala) via its editing domain.</text>
</comment>
<comment type="catalytic activity">
    <reaction evidence="1">
        <text>tRNA(Ala) + L-alanine + ATP = L-alanyl-tRNA(Ala) + AMP + diphosphate</text>
        <dbReference type="Rhea" id="RHEA:12540"/>
        <dbReference type="Rhea" id="RHEA-COMP:9657"/>
        <dbReference type="Rhea" id="RHEA-COMP:9923"/>
        <dbReference type="ChEBI" id="CHEBI:30616"/>
        <dbReference type="ChEBI" id="CHEBI:33019"/>
        <dbReference type="ChEBI" id="CHEBI:57972"/>
        <dbReference type="ChEBI" id="CHEBI:78442"/>
        <dbReference type="ChEBI" id="CHEBI:78497"/>
        <dbReference type="ChEBI" id="CHEBI:456215"/>
        <dbReference type="EC" id="6.1.1.7"/>
    </reaction>
</comment>
<comment type="cofactor">
    <cofactor evidence="1">
        <name>Zn(2+)</name>
        <dbReference type="ChEBI" id="CHEBI:29105"/>
    </cofactor>
    <text evidence="1">Binds 1 zinc ion per subunit.</text>
</comment>
<comment type="subcellular location">
    <subcellularLocation>
        <location evidence="1">Cytoplasm</location>
    </subcellularLocation>
</comment>
<comment type="domain">
    <text evidence="1">Consists of three domains; the N-terminal catalytic domain, the editing domain and the C-terminal C-Ala domain. The editing domain removes incorrectly charged amino acids, while the C-Ala domain, along with tRNA(Ala), serves as a bridge to cooperatively bring together the editing and aminoacylation centers thus stimulating deacylation of misacylated tRNAs.</text>
</comment>
<comment type="similarity">
    <text evidence="1">Belongs to the class-II aminoacyl-tRNA synthetase family.</text>
</comment>
<evidence type="ECO:0000255" key="1">
    <source>
        <dbReference type="HAMAP-Rule" id="MF_00036"/>
    </source>
</evidence>
<organism>
    <name type="scientific">Streptococcus mutans serotype c (strain ATCC 700610 / UA159)</name>
    <dbReference type="NCBI Taxonomy" id="210007"/>
    <lineage>
        <taxon>Bacteria</taxon>
        <taxon>Bacillati</taxon>
        <taxon>Bacillota</taxon>
        <taxon>Bacilli</taxon>
        <taxon>Lactobacillales</taxon>
        <taxon>Streptococcaceae</taxon>
        <taxon>Streptococcus</taxon>
    </lineage>
</organism>
<accession>Q8CWY0</accession>
<name>SYA_STRMU</name>
<gene>
    <name evidence="1" type="primary">alaS</name>
    <name type="ordered locus">SMU_650</name>
</gene>
<sequence>MKQLTSAQVRQMWLDFWKSKDHAIEPSANLVPVNDPTLLWINSGVATLKKYFDGSVIPENPRITNAQKAIRTNDIENVGKTARHHTMFEMLGNFSVGDYFRDDAIKWGFELLTSPEWFDLPKDKLYMTYYPDDKDSYNRWIECGVDPSHLIPIEDNFWEIGAGPSGPDTEIFFDRGEDFDPDHIGVRLLAEDIENDRYIEIWNIVLSQFNADPAVPRSEYKELPHKNIDTGAGLERLVAVMQGAKTNFETDLFMPIIREIEKLSGKTYDQDGDNMSFKVIADHIRSLSFAIGDGALPGNEGRGYVLRRLLRRAVMHGRRLGINEPFLYKLVPTVGKIMESYYPEVLEKQDFIEKIVKREEETFARTIDAGSNMLDQLLADLKAADKDTLEGKDIFRLYDTYGFPVELTEELAEDAGFKIDHQGFQAAMKEQQERARANVVKGGSMGMQNETLSNITEKSTFNYEKEALDSSLSVIIADNKRIEAVSEGQVLLVFSETPFYAEMGGQVADHGLIKNDKGDTVARVTDVQKAPNGQALHTVDVLGSLSVGTTYHLEIDHERRNRVMKNHTATHLLHAALHNVIGNHATQAGSLNEVEFLRFDFTHFEAVTPEELRQIEEEVNQQIWKAIPVTTIETDLDTAKEMGAMALFGEKYGKNVRVVSIGDYSVELCGGTHLKNTSEIGIFKIVKEEGIGSGTRRILAVTSKEAFEAYRQEEDILKEIATTLKAPQMNQVANKVASLQDQLHKLQKENAELKEKAAAVAAGDIFKDVKEVNGLRYIASQVEVADAGALRTFADKWKQKDYSDVLVLVASIGKKVNVLVASKSKDIHAGNLIKALAPIVSGRGGGKPDMAMAGGSDASAIKDLIAAVAENL</sequence>
<dbReference type="EC" id="6.1.1.7" evidence="1"/>
<dbReference type="EMBL" id="AE014133">
    <property type="protein sequence ID" value="AAN58384.1"/>
    <property type="molecule type" value="Genomic_DNA"/>
</dbReference>
<dbReference type="RefSeq" id="NP_721078.1">
    <property type="nucleotide sequence ID" value="NC_004350.2"/>
</dbReference>
<dbReference type="RefSeq" id="WP_002261891.1">
    <property type="nucleotide sequence ID" value="NC_004350.2"/>
</dbReference>
<dbReference type="SMR" id="Q8CWY0"/>
<dbReference type="STRING" id="210007.SMU_650"/>
<dbReference type="KEGG" id="smu:SMU_650"/>
<dbReference type="PATRIC" id="fig|210007.7.peg.576"/>
<dbReference type="eggNOG" id="COG0013">
    <property type="taxonomic scope" value="Bacteria"/>
</dbReference>
<dbReference type="HOGENOM" id="CLU_004485_1_1_9"/>
<dbReference type="OrthoDB" id="9803884at2"/>
<dbReference type="PhylomeDB" id="Q8CWY0"/>
<dbReference type="Proteomes" id="UP000002512">
    <property type="component" value="Chromosome"/>
</dbReference>
<dbReference type="GO" id="GO:0005829">
    <property type="term" value="C:cytosol"/>
    <property type="evidence" value="ECO:0007669"/>
    <property type="project" value="TreeGrafter"/>
</dbReference>
<dbReference type="GO" id="GO:0004813">
    <property type="term" value="F:alanine-tRNA ligase activity"/>
    <property type="evidence" value="ECO:0007669"/>
    <property type="project" value="UniProtKB-UniRule"/>
</dbReference>
<dbReference type="GO" id="GO:0002161">
    <property type="term" value="F:aminoacyl-tRNA deacylase activity"/>
    <property type="evidence" value="ECO:0007669"/>
    <property type="project" value="TreeGrafter"/>
</dbReference>
<dbReference type="GO" id="GO:0005524">
    <property type="term" value="F:ATP binding"/>
    <property type="evidence" value="ECO:0007669"/>
    <property type="project" value="UniProtKB-UniRule"/>
</dbReference>
<dbReference type="GO" id="GO:0140096">
    <property type="term" value="F:catalytic activity, acting on a protein"/>
    <property type="evidence" value="ECO:0007669"/>
    <property type="project" value="UniProtKB-ARBA"/>
</dbReference>
<dbReference type="GO" id="GO:0016740">
    <property type="term" value="F:transferase activity"/>
    <property type="evidence" value="ECO:0007669"/>
    <property type="project" value="UniProtKB-ARBA"/>
</dbReference>
<dbReference type="GO" id="GO:0000049">
    <property type="term" value="F:tRNA binding"/>
    <property type="evidence" value="ECO:0007669"/>
    <property type="project" value="UniProtKB-KW"/>
</dbReference>
<dbReference type="GO" id="GO:0008270">
    <property type="term" value="F:zinc ion binding"/>
    <property type="evidence" value="ECO:0007669"/>
    <property type="project" value="UniProtKB-UniRule"/>
</dbReference>
<dbReference type="GO" id="GO:0006419">
    <property type="term" value="P:alanyl-tRNA aminoacylation"/>
    <property type="evidence" value="ECO:0007669"/>
    <property type="project" value="UniProtKB-UniRule"/>
</dbReference>
<dbReference type="CDD" id="cd00673">
    <property type="entry name" value="AlaRS_core"/>
    <property type="match status" value="1"/>
</dbReference>
<dbReference type="FunFam" id="3.10.310.40:FF:000001">
    <property type="entry name" value="Alanine--tRNA ligase"/>
    <property type="match status" value="1"/>
</dbReference>
<dbReference type="FunFam" id="3.30.54.20:FF:000001">
    <property type="entry name" value="Alanine--tRNA ligase"/>
    <property type="match status" value="1"/>
</dbReference>
<dbReference type="FunFam" id="3.30.930.10:FF:000046">
    <property type="entry name" value="Alanine--tRNA ligase"/>
    <property type="match status" value="1"/>
</dbReference>
<dbReference type="FunFam" id="3.30.980.10:FF:000004">
    <property type="entry name" value="Alanine--tRNA ligase, cytoplasmic"/>
    <property type="match status" value="1"/>
</dbReference>
<dbReference type="Gene3D" id="2.40.30.130">
    <property type="match status" value="1"/>
</dbReference>
<dbReference type="Gene3D" id="3.10.310.40">
    <property type="match status" value="1"/>
</dbReference>
<dbReference type="Gene3D" id="3.30.54.20">
    <property type="match status" value="1"/>
</dbReference>
<dbReference type="Gene3D" id="6.10.250.550">
    <property type="match status" value="1"/>
</dbReference>
<dbReference type="Gene3D" id="3.30.930.10">
    <property type="entry name" value="Bira Bifunctional Protein, Domain 2"/>
    <property type="match status" value="1"/>
</dbReference>
<dbReference type="Gene3D" id="3.30.980.10">
    <property type="entry name" value="Threonyl-trna Synthetase, Chain A, domain 2"/>
    <property type="match status" value="1"/>
</dbReference>
<dbReference type="HAMAP" id="MF_00036_B">
    <property type="entry name" value="Ala_tRNA_synth_B"/>
    <property type="match status" value="1"/>
</dbReference>
<dbReference type="InterPro" id="IPR045864">
    <property type="entry name" value="aa-tRNA-synth_II/BPL/LPL"/>
</dbReference>
<dbReference type="InterPro" id="IPR002318">
    <property type="entry name" value="Ala-tRNA-lgiase_IIc"/>
</dbReference>
<dbReference type="InterPro" id="IPR018162">
    <property type="entry name" value="Ala-tRNA-ligase_IIc_anticod-bd"/>
</dbReference>
<dbReference type="InterPro" id="IPR018165">
    <property type="entry name" value="Ala-tRNA-synth_IIc_core"/>
</dbReference>
<dbReference type="InterPro" id="IPR018164">
    <property type="entry name" value="Ala-tRNA-synth_IIc_N"/>
</dbReference>
<dbReference type="InterPro" id="IPR050058">
    <property type="entry name" value="Ala-tRNA_ligase"/>
</dbReference>
<dbReference type="InterPro" id="IPR023033">
    <property type="entry name" value="Ala_tRNA_ligase_euk/bac"/>
</dbReference>
<dbReference type="InterPro" id="IPR003156">
    <property type="entry name" value="DHHA1_dom"/>
</dbReference>
<dbReference type="InterPro" id="IPR018163">
    <property type="entry name" value="Thr/Ala-tRNA-synth_IIc_edit"/>
</dbReference>
<dbReference type="InterPro" id="IPR009000">
    <property type="entry name" value="Transl_B-barrel_sf"/>
</dbReference>
<dbReference type="InterPro" id="IPR012947">
    <property type="entry name" value="tRNA_SAD"/>
</dbReference>
<dbReference type="NCBIfam" id="TIGR00344">
    <property type="entry name" value="alaS"/>
    <property type="match status" value="1"/>
</dbReference>
<dbReference type="PANTHER" id="PTHR11777:SF9">
    <property type="entry name" value="ALANINE--TRNA LIGASE, CYTOPLASMIC"/>
    <property type="match status" value="1"/>
</dbReference>
<dbReference type="PANTHER" id="PTHR11777">
    <property type="entry name" value="ALANYL-TRNA SYNTHETASE"/>
    <property type="match status" value="1"/>
</dbReference>
<dbReference type="Pfam" id="PF02272">
    <property type="entry name" value="DHHA1"/>
    <property type="match status" value="1"/>
</dbReference>
<dbReference type="Pfam" id="PF01411">
    <property type="entry name" value="tRNA-synt_2c"/>
    <property type="match status" value="1"/>
</dbReference>
<dbReference type="Pfam" id="PF07973">
    <property type="entry name" value="tRNA_SAD"/>
    <property type="match status" value="1"/>
</dbReference>
<dbReference type="PRINTS" id="PR00980">
    <property type="entry name" value="TRNASYNTHALA"/>
</dbReference>
<dbReference type="SMART" id="SM00863">
    <property type="entry name" value="tRNA_SAD"/>
    <property type="match status" value="1"/>
</dbReference>
<dbReference type="SUPFAM" id="SSF55681">
    <property type="entry name" value="Class II aaRS and biotin synthetases"/>
    <property type="match status" value="1"/>
</dbReference>
<dbReference type="SUPFAM" id="SSF101353">
    <property type="entry name" value="Putative anticodon-binding domain of alanyl-tRNA synthetase (AlaRS)"/>
    <property type="match status" value="1"/>
</dbReference>
<dbReference type="SUPFAM" id="SSF55186">
    <property type="entry name" value="ThrRS/AlaRS common domain"/>
    <property type="match status" value="1"/>
</dbReference>
<dbReference type="SUPFAM" id="SSF50447">
    <property type="entry name" value="Translation proteins"/>
    <property type="match status" value="1"/>
</dbReference>
<dbReference type="PROSITE" id="PS50860">
    <property type="entry name" value="AA_TRNA_LIGASE_II_ALA"/>
    <property type="match status" value="1"/>
</dbReference>